<feature type="chain" id="PRO_0000319194" description="Formate-dependent phosphoribosylglycinamide formyltransferase">
    <location>
        <begin position="1"/>
        <end position="394"/>
    </location>
</feature>
<feature type="domain" description="ATP-grasp" evidence="1">
    <location>
        <begin position="118"/>
        <end position="307"/>
    </location>
</feature>
<feature type="binding site" evidence="1">
    <location>
        <begin position="21"/>
        <end position="22"/>
    </location>
    <ligand>
        <name>N(1)-(5-phospho-beta-D-ribosyl)glycinamide</name>
        <dbReference type="ChEBI" id="CHEBI:143788"/>
    </ligand>
</feature>
<feature type="binding site" evidence="1">
    <location>
        <position position="81"/>
    </location>
    <ligand>
        <name>N(1)-(5-phospho-beta-D-ribosyl)glycinamide</name>
        <dbReference type="ChEBI" id="CHEBI:143788"/>
    </ligand>
</feature>
<feature type="binding site" evidence="1">
    <location>
        <position position="113"/>
    </location>
    <ligand>
        <name>ATP</name>
        <dbReference type="ChEBI" id="CHEBI:30616"/>
    </ligand>
</feature>
<feature type="binding site" evidence="1">
    <location>
        <position position="154"/>
    </location>
    <ligand>
        <name>ATP</name>
        <dbReference type="ChEBI" id="CHEBI:30616"/>
    </ligand>
</feature>
<feature type="binding site" evidence="1">
    <location>
        <begin position="159"/>
        <end position="164"/>
    </location>
    <ligand>
        <name>ATP</name>
        <dbReference type="ChEBI" id="CHEBI:30616"/>
    </ligand>
</feature>
<feature type="binding site" evidence="1">
    <location>
        <begin position="194"/>
        <end position="197"/>
    </location>
    <ligand>
        <name>ATP</name>
        <dbReference type="ChEBI" id="CHEBI:30616"/>
    </ligand>
</feature>
<feature type="binding site" evidence="1">
    <location>
        <position position="202"/>
    </location>
    <ligand>
        <name>ATP</name>
        <dbReference type="ChEBI" id="CHEBI:30616"/>
    </ligand>
</feature>
<feature type="binding site" evidence="1">
    <location>
        <position position="266"/>
    </location>
    <ligand>
        <name>Mg(2+)</name>
        <dbReference type="ChEBI" id="CHEBI:18420"/>
    </ligand>
</feature>
<feature type="binding site" evidence="1">
    <location>
        <position position="278"/>
    </location>
    <ligand>
        <name>Mg(2+)</name>
        <dbReference type="ChEBI" id="CHEBI:18420"/>
    </ligand>
</feature>
<feature type="binding site" evidence="1">
    <location>
        <position position="285"/>
    </location>
    <ligand>
        <name>N(1)-(5-phospho-beta-D-ribosyl)glycinamide</name>
        <dbReference type="ChEBI" id="CHEBI:143788"/>
    </ligand>
</feature>
<feature type="binding site" evidence="1">
    <location>
        <position position="355"/>
    </location>
    <ligand>
        <name>N(1)-(5-phospho-beta-D-ribosyl)glycinamide</name>
        <dbReference type="ChEBI" id="CHEBI:143788"/>
    </ligand>
</feature>
<feature type="binding site" evidence="1">
    <location>
        <begin position="362"/>
        <end position="363"/>
    </location>
    <ligand>
        <name>N(1)-(5-phospho-beta-D-ribosyl)glycinamide</name>
        <dbReference type="ChEBI" id="CHEBI:143788"/>
    </ligand>
</feature>
<sequence length="394" mass="42866">MNLGTPLKPGATRVLLLGSGELGKEVAIEAQRLGVEVIAVDRYADAPAMQVAHRSHVISMQDREELKRVIGLERPDLIVPEIEAIDTEFLLELEQGGQRVIPTARATNLTMNREGIRRLAAEELGLPTARYAFAASLEEMRGHVAQIGCPCVIKPIMSSSGKGQSVLRDPSQVDEAWRYAMEGARGASDTVIIEEFIQFDYEITLLTVRHCNGTSFCPPIGHVQIKGDYHESWQPMAMSPAALAEARRQAEAVTTALGGYGLFGVELFISNDRVLFSEVSPRPHDTGMVTMISQNLSQFELHVRAILGLPVGEIVNLAPSASHVILADASFDAVRFEGLEQALEVATSKLRLFGKPDTRPGRRMGVALVQGKDTDEARGRAEACAHAVRMVPLS</sequence>
<keyword id="KW-0067">ATP-binding</keyword>
<keyword id="KW-0436">Ligase</keyword>
<keyword id="KW-0460">Magnesium</keyword>
<keyword id="KW-0479">Metal-binding</keyword>
<keyword id="KW-0547">Nucleotide-binding</keyword>
<keyword id="KW-0658">Purine biosynthesis</keyword>
<keyword id="KW-1185">Reference proteome</keyword>
<name>PURT_PELPD</name>
<proteinExistence type="inferred from homology"/>
<dbReference type="EC" id="6.3.1.21" evidence="1"/>
<dbReference type="EMBL" id="CP000482">
    <property type="protein sequence ID" value="ABK99006.1"/>
    <property type="molecule type" value="Genomic_DNA"/>
</dbReference>
<dbReference type="RefSeq" id="WP_011735299.1">
    <property type="nucleotide sequence ID" value="NC_008609.1"/>
</dbReference>
<dbReference type="SMR" id="A1ANT6"/>
<dbReference type="STRING" id="338966.Ppro_1390"/>
<dbReference type="KEGG" id="ppd:Ppro_1390"/>
<dbReference type="eggNOG" id="COG0027">
    <property type="taxonomic scope" value="Bacteria"/>
</dbReference>
<dbReference type="HOGENOM" id="CLU_011534_1_3_7"/>
<dbReference type="OrthoDB" id="9804625at2"/>
<dbReference type="UniPathway" id="UPA00074">
    <property type="reaction ID" value="UER00127"/>
</dbReference>
<dbReference type="Proteomes" id="UP000006732">
    <property type="component" value="Chromosome"/>
</dbReference>
<dbReference type="GO" id="GO:0005829">
    <property type="term" value="C:cytosol"/>
    <property type="evidence" value="ECO:0007669"/>
    <property type="project" value="TreeGrafter"/>
</dbReference>
<dbReference type="GO" id="GO:0005524">
    <property type="term" value="F:ATP binding"/>
    <property type="evidence" value="ECO:0007669"/>
    <property type="project" value="UniProtKB-UniRule"/>
</dbReference>
<dbReference type="GO" id="GO:0000287">
    <property type="term" value="F:magnesium ion binding"/>
    <property type="evidence" value="ECO:0007669"/>
    <property type="project" value="InterPro"/>
</dbReference>
<dbReference type="GO" id="GO:0043815">
    <property type="term" value="F:phosphoribosylglycinamide formyltransferase 2 activity"/>
    <property type="evidence" value="ECO:0007669"/>
    <property type="project" value="UniProtKB-UniRule"/>
</dbReference>
<dbReference type="GO" id="GO:0004644">
    <property type="term" value="F:phosphoribosylglycinamide formyltransferase activity"/>
    <property type="evidence" value="ECO:0007669"/>
    <property type="project" value="InterPro"/>
</dbReference>
<dbReference type="GO" id="GO:0006189">
    <property type="term" value="P:'de novo' IMP biosynthetic process"/>
    <property type="evidence" value="ECO:0007669"/>
    <property type="project" value="UniProtKB-UniRule"/>
</dbReference>
<dbReference type="FunFam" id="3.40.50.20:FF:000007">
    <property type="entry name" value="Formate-dependent phosphoribosylglycinamide formyltransferase"/>
    <property type="match status" value="1"/>
</dbReference>
<dbReference type="Gene3D" id="3.40.50.20">
    <property type="match status" value="1"/>
</dbReference>
<dbReference type="Gene3D" id="3.30.1490.20">
    <property type="entry name" value="ATP-grasp fold, A domain"/>
    <property type="match status" value="1"/>
</dbReference>
<dbReference type="Gene3D" id="3.30.470.20">
    <property type="entry name" value="ATP-grasp fold, B domain"/>
    <property type="match status" value="1"/>
</dbReference>
<dbReference type="HAMAP" id="MF_01643">
    <property type="entry name" value="PurT"/>
    <property type="match status" value="1"/>
</dbReference>
<dbReference type="InterPro" id="IPR011761">
    <property type="entry name" value="ATP-grasp"/>
</dbReference>
<dbReference type="InterPro" id="IPR003135">
    <property type="entry name" value="ATP-grasp_carboxylate-amine"/>
</dbReference>
<dbReference type="InterPro" id="IPR013815">
    <property type="entry name" value="ATP_grasp_subdomain_1"/>
</dbReference>
<dbReference type="InterPro" id="IPR016185">
    <property type="entry name" value="PreATP-grasp_dom_sf"/>
</dbReference>
<dbReference type="InterPro" id="IPR005862">
    <property type="entry name" value="PurT"/>
</dbReference>
<dbReference type="InterPro" id="IPR054350">
    <property type="entry name" value="PurT/PurK_preATP-grasp"/>
</dbReference>
<dbReference type="InterPro" id="IPR048740">
    <property type="entry name" value="PurT_C"/>
</dbReference>
<dbReference type="InterPro" id="IPR011054">
    <property type="entry name" value="Rudment_hybrid_motif"/>
</dbReference>
<dbReference type="NCBIfam" id="NF006766">
    <property type="entry name" value="PRK09288.1"/>
    <property type="match status" value="1"/>
</dbReference>
<dbReference type="NCBIfam" id="TIGR01142">
    <property type="entry name" value="purT"/>
    <property type="match status" value="1"/>
</dbReference>
<dbReference type="PANTHER" id="PTHR43055">
    <property type="entry name" value="FORMATE-DEPENDENT PHOSPHORIBOSYLGLYCINAMIDE FORMYLTRANSFERASE"/>
    <property type="match status" value="1"/>
</dbReference>
<dbReference type="PANTHER" id="PTHR43055:SF1">
    <property type="entry name" value="FORMATE-DEPENDENT PHOSPHORIBOSYLGLYCINAMIDE FORMYLTRANSFERASE"/>
    <property type="match status" value="1"/>
</dbReference>
<dbReference type="Pfam" id="PF02222">
    <property type="entry name" value="ATP-grasp"/>
    <property type="match status" value="1"/>
</dbReference>
<dbReference type="Pfam" id="PF21244">
    <property type="entry name" value="PurT_C"/>
    <property type="match status" value="1"/>
</dbReference>
<dbReference type="Pfam" id="PF22660">
    <property type="entry name" value="RS_preATP-grasp-like"/>
    <property type="match status" value="1"/>
</dbReference>
<dbReference type="SUPFAM" id="SSF56059">
    <property type="entry name" value="Glutathione synthetase ATP-binding domain-like"/>
    <property type="match status" value="1"/>
</dbReference>
<dbReference type="SUPFAM" id="SSF52440">
    <property type="entry name" value="PreATP-grasp domain"/>
    <property type="match status" value="1"/>
</dbReference>
<dbReference type="SUPFAM" id="SSF51246">
    <property type="entry name" value="Rudiment single hybrid motif"/>
    <property type="match status" value="1"/>
</dbReference>
<dbReference type="PROSITE" id="PS50975">
    <property type="entry name" value="ATP_GRASP"/>
    <property type="match status" value="1"/>
</dbReference>
<evidence type="ECO:0000255" key="1">
    <source>
        <dbReference type="HAMAP-Rule" id="MF_01643"/>
    </source>
</evidence>
<organism>
    <name type="scientific">Pelobacter propionicus (strain DSM 2379 / NBRC 103807 / OttBd1)</name>
    <dbReference type="NCBI Taxonomy" id="338966"/>
    <lineage>
        <taxon>Bacteria</taxon>
        <taxon>Pseudomonadati</taxon>
        <taxon>Thermodesulfobacteriota</taxon>
        <taxon>Desulfuromonadia</taxon>
        <taxon>Desulfuromonadales</taxon>
        <taxon>Desulfuromonadaceae</taxon>
        <taxon>Pelobacter</taxon>
    </lineage>
</organism>
<reference key="1">
    <citation type="submission" date="2006-10" db="EMBL/GenBank/DDBJ databases">
        <title>Complete sequence of chromosome of Pelobacter propionicus DSM 2379.</title>
        <authorList>
            <consortium name="US DOE Joint Genome Institute"/>
            <person name="Copeland A."/>
            <person name="Lucas S."/>
            <person name="Lapidus A."/>
            <person name="Barry K."/>
            <person name="Detter J.C."/>
            <person name="Glavina del Rio T."/>
            <person name="Hammon N."/>
            <person name="Israni S."/>
            <person name="Dalin E."/>
            <person name="Tice H."/>
            <person name="Pitluck S."/>
            <person name="Saunders E."/>
            <person name="Brettin T."/>
            <person name="Bruce D."/>
            <person name="Han C."/>
            <person name="Tapia R."/>
            <person name="Schmutz J."/>
            <person name="Larimer F."/>
            <person name="Land M."/>
            <person name="Hauser L."/>
            <person name="Kyrpides N."/>
            <person name="Kim E."/>
            <person name="Lovley D."/>
            <person name="Richardson P."/>
        </authorList>
    </citation>
    <scope>NUCLEOTIDE SEQUENCE [LARGE SCALE GENOMIC DNA]</scope>
    <source>
        <strain>DSM 2379 / NBRC 103807 / OttBd1</strain>
    </source>
</reference>
<comment type="function">
    <text evidence="1">Involved in the de novo purine biosynthesis. Catalyzes the transfer of formate to 5-phospho-ribosyl-glycinamide (GAR), producing 5-phospho-ribosyl-N-formylglycinamide (FGAR). Formate is provided by PurU via hydrolysis of 10-formyl-tetrahydrofolate.</text>
</comment>
<comment type="catalytic activity">
    <reaction evidence="1">
        <text>N(1)-(5-phospho-beta-D-ribosyl)glycinamide + formate + ATP = N(2)-formyl-N(1)-(5-phospho-beta-D-ribosyl)glycinamide + ADP + phosphate + H(+)</text>
        <dbReference type="Rhea" id="RHEA:24829"/>
        <dbReference type="ChEBI" id="CHEBI:15378"/>
        <dbReference type="ChEBI" id="CHEBI:15740"/>
        <dbReference type="ChEBI" id="CHEBI:30616"/>
        <dbReference type="ChEBI" id="CHEBI:43474"/>
        <dbReference type="ChEBI" id="CHEBI:143788"/>
        <dbReference type="ChEBI" id="CHEBI:147286"/>
        <dbReference type="ChEBI" id="CHEBI:456216"/>
        <dbReference type="EC" id="6.3.1.21"/>
    </reaction>
    <physiologicalReaction direction="left-to-right" evidence="1">
        <dbReference type="Rhea" id="RHEA:24830"/>
    </physiologicalReaction>
</comment>
<comment type="pathway">
    <text evidence="1">Purine metabolism; IMP biosynthesis via de novo pathway; N(2)-formyl-N(1)-(5-phospho-D-ribosyl)glycinamide from N(1)-(5-phospho-D-ribosyl)glycinamide (formate route): step 1/1.</text>
</comment>
<comment type="subunit">
    <text evidence="1">Homodimer.</text>
</comment>
<comment type="similarity">
    <text evidence="1">Belongs to the PurK/PurT family.</text>
</comment>
<protein>
    <recommendedName>
        <fullName evidence="1">Formate-dependent phosphoribosylglycinamide formyltransferase</fullName>
        <ecNumber evidence="1">6.3.1.21</ecNumber>
    </recommendedName>
    <alternativeName>
        <fullName evidence="1">5'-phosphoribosylglycinamide transformylase 2</fullName>
    </alternativeName>
    <alternativeName>
        <fullName evidence="1">Formate-dependent GAR transformylase</fullName>
    </alternativeName>
    <alternativeName>
        <fullName evidence="1">GAR transformylase 2</fullName>
        <shortName evidence="1">GART 2</shortName>
    </alternativeName>
    <alternativeName>
        <fullName evidence="1">Non-folate glycinamide ribonucleotide transformylase</fullName>
    </alternativeName>
    <alternativeName>
        <fullName evidence="1">Phosphoribosylglycinamide formyltransferase 2</fullName>
    </alternativeName>
</protein>
<accession>A1ANT6</accession>
<gene>
    <name evidence="1" type="primary">purT</name>
    <name type="ordered locus">Ppro_1390</name>
</gene>